<dbReference type="EMBL" id="CH940652">
    <property type="protein sequence ID" value="EDW59675.1"/>
    <property type="molecule type" value="Genomic_DNA"/>
</dbReference>
<dbReference type="SMR" id="B4M4W4"/>
<dbReference type="FunCoup" id="B4M4W4">
    <property type="interactions" value="734"/>
</dbReference>
<dbReference type="STRING" id="7244.B4M4W4"/>
<dbReference type="EnsemblMetazoa" id="XM_032433510.1">
    <property type="protein sequence ID" value="XP_032289401.1"/>
    <property type="gene ID" value="LOC6632928"/>
</dbReference>
<dbReference type="GeneID" id="6632928"/>
<dbReference type="KEGG" id="dvi:6632928"/>
<dbReference type="eggNOG" id="KOG2444">
    <property type="taxonomic scope" value="Eukaryota"/>
</dbReference>
<dbReference type="HOGENOM" id="CLU_035848_1_0_1"/>
<dbReference type="InParanoid" id="B4M4W4"/>
<dbReference type="OMA" id="QAIHPTE"/>
<dbReference type="OrthoDB" id="2288928at2759"/>
<dbReference type="PhylomeDB" id="B4M4W4"/>
<dbReference type="Proteomes" id="UP000008792">
    <property type="component" value="Unassembled WGS sequence"/>
</dbReference>
<dbReference type="FunFam" id="2.130.10.10:FF:001280">
    <property type="entry name" value="WD repeat-containing protein 55 homolog"/>
    <property type="match status" value="1"/>
</dbReference>
<dbReference type="Gene3D" id="2.130.10.10">
    <property type="entry name" value="YVTN repeat-like/Quinoprotein amine dehydrogenase"/>
    <property type="match status" value="2"/>
</dbReference>
<dbReference type="InterPro" id="IPR015943">
    <property type="entry name" value="WD40/YVTN_repeat-like_dom_sf"/>
</dbReference>
<dbReference type="InterPro" id="IPR019775">
    <property type="entry name" value="WD40_repeat_CS"/>
</dbReference>
<dbReference type="InterPro" id="IPR036322">
    <property type="entry name" value="WD40_repeat_dom_sf"/>
</dbReference>
<dbReference type="InterPro" id="IPR001680">
    <property type="entry name" value="WD40_rpt"/>
</dbReference>
<dbReference type="InterPro" id="IPR050505">
    <property type="entry name" value="WDR55_POC1"/>
</dbReference>
<dbReference type="PANTHER" id="PTHR44019">
    <property type="entry name" value="WD REPEAT-CONTAINING PROTEIN 55"/>
    <property type="match status" value="1"/>
</dbReference>
<dbReference type="PANTHER" id="PTHR44019:SF20">
    <property type="entry name" value="WD REPEAT-CONTAINING PROTEIN 55"/>
    <property type="match status" value="1"/>
</dbReference>
<dbReference type="Pfam" id="PF24796">
    <property type="entry name" value="WDR55"/>
    <property type="match status" value="1"/>
</dbReference>
<dbReference type="SMART" id="SM00320">
    <property type="entry name" value="WD40"/>
    <property type="match status" value="5"/>
</dbReference>
<dbReference type="SUPFAM" id="SSF50978">
    <property type="entry name" value="WD40 repeat-like"/>
    <property type="match status" value="1"/>
</dbReference>
<dbReference type="PROSITE" id="PS00678">
    <property type="entry name" value="WD_REPEATS_1"/>
    <property type="match status" value="1"/>
</dbReference>
<dbReference type="PROSITE" id="PS50082">
    <property type="entry name" value="WD_REPEATS_2"/>
    <property type="match status" value="2"/>
</dbReference>
<dbReference type="PROSITE" id="PS50294">
    <property type="entry name" value="WD_REPEATS_REGION"/>
    <property type="match status" value="1"/>
</dbReference>
<organism>
    <name type="scientific">Drosophila virilis</name>
    <name type="common">Fruit fly</name>
    <dbReference type="NCBI Taxonomy" id="7244"/>
    <lineage>
        <taxon>Eukaryota</taxon>
        <taxon>Metazoa</taxon>
        <taxon>Ecdysozoa</taxon>
        <taxon>Arthropoda</taxon>
        <taxon>Hexapoda</taxon>
        <taxon>Insecta</taxon>
        <taxon>Pterygota</taxon>
        <taxon>Neoptera</taxon>
        <taxon>Endopterygota</taxon>
        <taxon>Diptera</taxon>
        <taxon>Brachycera</taxon>
        <taxon>Muscomorpha</taxon>
        <taxon>Ephydroidea</taxon>
        <taxon>Drosophilidae</taxon>
        <taxon>Drosophila</taxon>
    </lineage>
</organism>
<feature type="chain" id="PRO_0000373966" description="WD repeat-containing protein 55 homolog">
    <location>
        <begin position="1"/>
        <end position="504"/>
    </location>
</feature>
<feature type="repeat" description="WD 1">
    <location>
        <begin position="156"/>
        <end position="195"/>
    </location>
</feature>
<feature type="repeat" description="WD 2">
    <location>
        <begin position="200"/>
        <end position="239"/>
    </location>
</feature>
<feature type="repeat" description="WD 3">
    <location>
        <begin position="243"/>
        <end position="281"/>
    </location>
</feature>
<feature type="repeat" description="WD 4">
    <location>
        <begin position="284"/>
        <end position="323"/>
    </location>
</feature>
<feature type="repeat" description="WD 5">
    <location>
        <begin position="326"/>
        <end position="365"/>
    </location>
</feature>
<feature type="repeat" description="WD 6">
    <location>
        <begin position="410"/>
        <end position="449"/>
    </location>
</feature>
<feature type="region of interest" description="Disordered" evidence="1">
    <location>
        <begin position="1"/>
        <end position="21"/>
    </location>
</feature>
<feature type="region of interest" description="Disordered" evidence="1">
    <location>
        <begin position="33"/>
        <end position="132"/>
    </location>
</feature>
<feature type="region of interest" description="Disordered" evidence="1">
    <location>
        <begin position="477"/>
        <end position="504"/>
    </location>
</feature>
<feature type="compositionally biased region" description="Acidic residues" evidence="1">
    <location>
        <begin position="12"/>
        <end position="21"/>
    </location>
</feature>
<feature type="compositionally biased region" description="Acidic residues" evidence="1">
    <location>
        <begin position="33"/>
        <end position="48"/>
    </location>
</feature>
<feature type="compositionally biased region" description="Low complexity" evidence="1">
    <location>
        <begin position="63"/>
        <end position="74"/>
    </location>
</feature>
<feature type="compositionally biased region" description="Acidic residues" evidence="1">
    <location>
        <begin position="78"/>
        <end position="89"/>
    </location>
</feature>
<sequence>MDRHEHFKAPANEDELDDIDDDMVVGVIAEIEQEVLNESESDDDEYDLVDMGAPEPQQADGHSSSNESISSDGSFDPNAEDSDSDDSMIDEAASGGASSAKRRKEQTATDGVGASGSGASGGADYSHLDDDDETDETVRAIIAAIKKPRSAPPEIKLEDFITDICFHPDRDIIALATIIGDVHLYEYGNEENKLLRTIEVHAKACRDVEFTEDGRSLITCSKDKCVMVTDMETEKLKKLYETAHDDAINKLHVLDERLFATGDDAGTVKLWDFRTKDAIFELKEVEDQITQMLTNEQNKLLLATSADGYLTTYNIGARKLYVQSEPYEEELNCMGIYRGSSKLVAGTSKGRLYTYNWGYFGYHCDMYPGIKSPISLMIPITDRIACVAGEDGNIRACHIAPYRNLGVVGQHNMPIESLDINCSGELLASSSHNNDVRFWNVKYFEDFGDIKYNEKHNAYKEKRHNLPSSKCTNASDFFADMTKDQDDDDNDGGNDTAAGPSNVT</sequence>
<name>WDR55_DROVI</name>
<proteinExistence type="inferred from homology"/>
<reference key="1">
    <citation type="journal article" date="2007" name="Nature">
        <title>Evolution of genes and genomes on the Drosophila phylogeny.</title>
        <authorList>
            <consortium name="Drosophila 12 genomes consortium"/>
        </authorList>
    </citation>
    <scope>NUCLEOTIDE SEQUENCE [LARGE SCALE GENOMIC DNA]</scope>
    <source>
        <strain>Tucson 15010-1051.87</strain>
    </source>
</reference>
<evidence type="ECO:0000256" key="1">
    <source>
        <dbReference type="SAM" id="MobiDB-lite"/>
    </source>
</evidence>
<evidence type="ECO:0000305" key="2"/>
<protein>
    <recommendedName>
        <fullName>WD repeat-containing protein 55 homolog</fullName>
    </recommendedName>
</protein>
<gene>
    <name type="ORF">GJ10153</name>
</gene>
<accession>B4M4W4</accession>
<keyword id="KW-1185">Reference proteome</keyword>
<keyword id="KW-0677">Repeat</keyword>
<keyword id="KW-0853">WD repeat</keyword>
<comment type="similarity">
    <text evidence="2">Belongs to the WD repeat WDR55 family.</text>
</comment>